<gene>
    <name evidence="1" type="primary">acpS</name>
    <name type="ordered locus">BCG9842_B5060</name>
</gene>
<organism>
    <name type="scientific">Bacillus cereus (strain G9842)</name>
    <dbReference type="NCBI Taxonomy" id="405531"/>
    <lineage>
        <taxon>Bacteria</taxon>
        <taxon>Bacillati</taxon>
        <taxon>Bacillota</taxon>
        <taxon>Bacilli</taxon>
        <taxon>Bacillales</taxon>
        <taxon>Bacillaceae</taxon>
        <taxon>Bacillus</taxon>
        <taxon>Bacillus cereus group</taxon>
    </lineage>
</organism>
<dbReference type="EC" id="2.7.8.7" evidence="1"/>
<dbReference type="EMBL" id="CP001186">
    <property type="protein sequence ID" value="ACK96465.1"/>
    <property type="molecule type" value="Genomic_DNA"/>
</dbReference>
<dbReference type="RefSeq" id="WP_000583423.1">
    <property type="nucleotide sequence ID" value="NC_011772.1"/>
</dbReference>
<dbReference type="SMR" id="B7IU30"/>
<dbReference type="KEGG" id="bcg:BCG9842_B5060"/>
<dbReference type="HOGENOM" id="CLU_089696_1_2_9"/>
<dbReference type="Proteomes" id="UP000006744">
    <property type="component" value="Chromosome"/>
</dbReference>
<dbReference type="GO" id="GO:0005829">
    <property type="term" value="C:cytosol"/>
    <property type="evidence" value="ECO:0007669"/>
    <property type="project" value="TreeGrafter"/>
</dbReference>
<dbReference type="GO" id="GO:0008897">
    <property type="term" value="F:holo-[acyl-carrier-protein] synthase activity"/>
    <property type="evidence" value="ECO:0007669"/>
    <property type="project" value="UniProtKB-UniRule"/>
</dbReference>
<dbReference type="GO" id="GO:0000287">
    <property type="term" value="F:magnesium ion binding"/>
    <property type="evidence" value="ECO:0007669"/>
    <property type="project" value="UniProtKB-UniRule"/>
</dbReference>
<dbReference type="GO" id="GO:0006633">
    <property type="term" value="P:fatty acid biosynthetic process"/>
    <property type="evidence" value="ECO:0007669"/>
    <property type="project" value="UniProtKB-UniRule"/>
</dbReference>
<dbReference type="GO" id="GO:0019878">
    <property type="term" value="P:lysine biosynthetic process via aminoadipic acid"/>
    <property type="evidence" value="ECO:0007669"/>
    <property type="project" value="TreeGrafter"/>
</dbReference>
<dbReference type="Gene3D" id="3.90.470.20">
    <property type="entry name" value="4'-phosphopantetheinyl transferase domain"/>
    <property type="match status" value="1"/>
</dbReference>
<dbReference type="HAMAP" id="MF_00101">
    <property type="entry name" value="AcpS"/>
    <property type="match status" value="1"/>
</dbReference>
<dbReference type="InterPro" id="IPR008278">
    <property type="entry name" value="4-PPantetheinyl_Trfase_dom"/>
</dbReference>
<dbReference type="InterPro" id="IPR037143">
    <property type="entry name" value="4-PPantetheinyl_Trfase_dom_sf"/>
</dbReference>
<dbReference type="InterPro" id="IPR002582">
    <property type="entry name" value="ACPS"/>
</dbReference>
<dbReference type="InterPro" id="IPR050559">
    <property type="entry name" value="P-Pant_transferase_sf"/>
</dbReference>
<dbReference type="InterPro" id="IPR004568">
    <property type="entry name" value="Ppantetheine-prot_Trfase_dom"/>
</dbReference>
<dbReference type="NCBIfam" id="TIGR00516">
    <property type="entry name" value="acpS"/>
    <property type="match status" value="1"/>
</dbReference>
<dbReference type="NCBIfam" id="TIGR00556">
    <property type="entry name" value="pantethn_trn"/>
    <property type="match status" value="1"/>
</dbReference>
<dbReference type="PANTHER" id="PTHR12215:SF10">
    <property type="entry name" value="L-AMINOADIPATE-SEMIALDEHYDE DEHYDROGENASE-PHOSPHOPANTETHEINYL TRANSFERASE"/>
    <property type="match status" value="1"/>
</dbReference>
<dbReference type="PANTHER" id="PTHR12215">
    <property type="entry name" value="PHOSPHOPANTETHEINE TRANSFERASE"/>
    <property type="match status" value="1"/>
</dbReference>
<dbReference type="Pfam" id="PF01648">
    <property type="entry name" value="ACPS"/>
    <property type="match status" value="1"/>
</dbReference>
<dbReference type="SUPFAM" id="SSF56214">
    <property type="entry name" value="4'-phosphopantetheinyl transferase"/>
    <property type="match status" value="1"/>
</dbReference>
<sequence length="119" mass="13255">MIIGIGIDIIELNRIEKMLDGKLKFMERILTKNERNVAMELKGSRLTEFVAGRFAAKEAYSKAVGTGIGKEVSFLDIEVKNDERGKPILITSTEYVVHLSISHSKEFAVAQVVLESSSR</sequence>
<keyword id="KW-0963">Cytoplasm</keyword>
<keyword id="KW-0275">Fatty acid biosynthesis</keyword>
<keyword id="KW-0276">Fatty acid metabolism</keyword>
<keyword id="KW-0444">Lipid biosynthesis</keyword>
<keyword id="KW-0443">Lipid metabolism</keyword>
<keyword id="KW-0460">Magnesium</keyword>
<keyword id="KW-0479">Metal-binding</keyword>
<keyword id="KW-0808">Transferase</keyword>
<protein>
    <recommendedName>
        <fullName evidence="1">Holo-[acyl-carrier-protein] synthase</fullName>
        <shortName evidence="1">Holo-ACP synthase</shortName>
        <ecNumber evidence="1">2.7.8.7</ecNumber>
    </recommendedName>
    <alternativeName>
        <fullName evidence="1">4'-phosphopantetheinyl transferase AcpS</fullName>
    </alternativeName>
</protein>
<accession>B7IU30</accession>
<evidence type="ECO:0000255" key="1">
    <source>
        <dbReference type="HAMAP-Rule" id="MF_00101"/>
    </source>
</evidence>
<feature type="chain" id="PRO_1000117342" description="Holo-[acyl-carrier-protein] synthase">
    <location>
        <begin position="1"/>
        <end position="119"/>
    </location>
</feature>
<feature type="binding site" evidence="1">
    <location>
        <position position="8"/>
    </location>
    <ligand>
        <name>Mg(2+)</name>
        <dbReference type="ChEBI" id="CHEBI:18420"/>
    </ligand>
</feature>
<feature type="binding site" evidence="1">
    <location>
        <position position="58"/>
    </location>
    <ligand>
        <name>Mg(2+)</name>
        <dbReference type="ChEBI" id="CHEBI:18420"/>
    </ligand>
</feature>
<comment type="function">
    <text evidence="1">Transfers the 4'-phosphopantetheine moiety from coenzyme A to a Ser of acyl-carrier-protein.</text>
</comment>
<comment type="catalytic activity">
    <reaction evidence="1">
        <text>apo-[ACP] + CoA = holo-[ACP] + adenosine 3',5'-bisphosphate + H(+)</text>
        <dbReference type="Rhea" id="RHEA:12068"/>
        <dbReference type="Rhea" id="RHEA-COMP:9685"/>
        <dbReference type="Rhea" id="RHEA-COMP:9690"/>
        <dbReference type="ChEBI" id="CHEBI:15378"/>
        <dbReference type="ChEBI" id="CHEBI:29999"/>
        <dbReference type="ChEBI" id="CHEBI:57287"/>
        <dbReference type="ChEBI" id="CHEBI:58343"/>
        <dbReference type="ChEBI" id="CHEBI:64479"/>
        <dbReference type="EC" id="2.7.8.7"/>
    </reaction>
</comment>
<comment type="cofactor">
    <cofactor evidence="1">
        <name>Mg(2+)</name>
        <dbReference type="ChEBI" id="CHEBI:18420"/>
    </cofactor>
</comment>
<comment type="subcellular location">
    <subcellularLocation>
        <location evidence="1">Cytoplasm</location>
    </subcellularLocation>
</comment>
<comment type="similarity">
    <text evidence="1">Belongs to the P-Pant transferase superfamily. AcpS family.</text>
</comment>
<name>ACPS_BACC2</name>
<proteinExistence type="inferred from homology"/>
<reference key="1">
    <citation type="submission" date="2008-10" db="EMBL/GenBank/DDBJ databases">
        <title>Genome sequence of Bacillus cereus G9842.</title>
        <authorList>
            <person name="Dodson R.J."/>
            <person name="Durkin A.S."/>
            <person name="Rosovitz M.J."/>
            <person name="Rasko D.A."/>
            <person name="Hoffmaster A."/>
            <person name="Ravel J."/>
            <person name="Sutton G."/>
        </authorList>
    </citation>
    <scope>NUCLEOTIDE SEQUENCE [LARGE SCALE GENOMIC DNA]</scope>
    <source>
        <strain>G9842</strain>
    </source>
</reference>